<comment type="similarity">
    <text evidence="2">Belongs to the bacterial ribosomal protein bS21 family.</text>
</comment>
<organism>
    <name type="scientific">Pseudomonas putida</name>
    <name type="common">Arthrobacter siderocapsulatus</name>
    <dbReference type="NCBI Taxonomy" id="303"/>
    <lineage>
        <taxon>Bacteria</taxon>
        <taxon>Pseudomonadati</taxon>
        <taxon>Pseudomonadota</taxon>
        <taxon>Gammaproteobacteria</taxon>
        <taxon>Pseudomonadales</taxon>
        <taxon>Pseudomonadaceae</taxon>
        <taxon>Pseudomonas</taxon>
    </lineage>
</organism>
<sequence length="71" mass="8370">MPAVKVKENEPFDVALRRFKRSCEKAGVLAEVRSREFYEKPTAERKRKAAAAVKRHAKKVQREQRRAVRLY</sequence>
<protein>
    <recommendedName>
        <fullName evidence="2">Small ribosomal subunit protein bS21</fullName>
    </recommendedName>
    <alternativeName>
        <fullName>30S ribosomal protein S21</fullName>
    </alternativeName>
</protein>
<keyword id="KW-0687">Ribonucleoprotein</keyword>
<keyword id="KW-0689">Ribosomal protein</keyword>
<feature type="chain" id="PRO_0000178361" description="Small ribosomal subunit protein bS21">
    <location>
        <begin position="1"/>
        <end position="71"/>
    </location>
</feature>
<feature type="region of interest" description="Disordered" evidence="1">
    <location>
        <begin position="50"/>
        <end position="71"/>
    </location>
</feature>
<feature type="compositionally biased region" description="Basic residues" evidence="1">
    <location>
        <begin position="50"/>
        <end position="59"/>
    </location>
</feature>
<feature type="compositionally biased region" description="Basic and acidic residues" evidence="1">
    <location>
        <begin position="60"/>
        <end position="71"/>
    </location>
</feature>
<dbReference type="EMBL" id="AF014397">
    <property type="protein sequence ID" value="AAC38071.1"/>
    <property type="molecule type" value="Genomic_DNA"/>
</dbReference>
<dbReference type="RefSeq" id="WP_003255575.1">
    <property type="nucleotide sequence ID" value="NZ_WOWR01000040.1"/>
</dbReference>
<dbReference type="SMR" id="P0A166"/>
<dbReference type="GeneID" id="97165908"/>
<dbReference type="eggNOG" id="COG0828">
    <property type="taxonomic scope" value="Bacteria"/>
</dbReference>
<dbReference type="OMA" id="HQHFEKP"/>
<dbReference type="OrthoDB" id="9799244at2"/>
<dbReference type="GO" id="GO:1990904">
    <property type="term" value="C:ribonucleoprotein complex"/>
    <property type="evidence" value="ECO:0007669"/>
    <property type="project" value="UniProtKB-KW"/>
</dbReference>
<dbReference type="GO" id="GO:0005840">
    <property type="term" value="C:ribosome"/>
    <property type="evidence" value="ECO:0007669"/>
    <property type="project" value="UniProtKB-KW"/>
</dbReference>
<dbReference type="GO" id="GO:0003735">
    <property type="term" value="F:structural constituent of ribosome"/>
    <property type="evidence" value="ECO:0007669"/>
    <property type="project" value="InterPro"/>
</dbReference>
<dbReference type="GO" id="GO:0006412">
    <property type="term" value="P:translation"/>
    <property type="evidence" value="ECO:0007669"/>
    <property type="project" value="UniProtKB-UniRule"/>
</dbReference>
<dbReference type="Gene3D" id="1.20.5.1150">
    <property type="entry name" value="Ribosomal protein S8"/>
    <property type="match status" value="1"/>
</dbReference>
<dbReference type="HAMAP" id="MF_00358">
    <property type="entry name" value="Ribosomal_bS21"/>
    <property type="match status" value="1"/>
</dbReference>
<dbReference type="InterPro" id="IPR001911">
    <property type="entry name" value="Ribosomal_bS21"/>
</dbReference>
<dbReference type="InterPro" id="IPR018278">
    <property type="entry name" value="Ribosomal_bS21_CS"/>
</dbReference>
<dbReference type="InterPro" id="IPR038380">
    <property type="entry name" value="Ribosomal_bS21_sf"/>
</dbReference>
<dbReference type="NCBIfam" id="TIGR00030">
    <property type="entry name" value="S21p"/>
    <property type="match status" value="1"/>
</dbReference>
<dbReference type="PANTHER" id="PTHR21109">
    <property type="entry name" value="MITOCHONDRIAL 28S RIBOSOMAL PROTEIN S21"/>
    <property type="match status" value="1"/>
</dbReference>
<dbReference type="PANTHER" id="PTHR21109:SF22">
    <property type="entry name" value="SMALL RIBOSOMAL SUBUNIT PROTEIN BS21"/>
    <property type="match status" value="1"/>
</dbReference>
<dbReference type="Pfam" id="PF01165">
    <property type="entry name" value="Ribosomal_S21"/>
    <property type="match status" value="1"/>
</dbReference>
<dbReference type="PRINTS" id="PR00976">
    <property type="entry name" value="RIBOSOMALS21"/>
</dbReference>
<dbReference type="PROSITE" id="PS01181">
    <property type="entry name" value="RIBOSOMAL_S21"/>
    <property type="match status" value="1"/>
</dbReference>
<evidence type="ECO:0000256" key="1">
    <source>
        <dbReference type="SAM" id="MobiDB-lite"/>
    </source>
</evidence>
<evidence type="ECO:0000305" key="2"/>
<accession>P0A166</accession>
<accession>O51942</accession>
<proteinExistence type="inferred from homology"/>
<gene>
    <name type="primary">rpsU</name>
</gene>
<reference key="1">
    <citation type="journal article" date="1997" name="Gene">
        <title>Principal transcription sigma factors of Pseudomonas putida strains mt-2 and G1 are significantly different.</title>
        <authorList>
            <person name="Szafranski P."/>
            <person name="Smith C.L."/>
            <person name="Cantor C.R."/>
        </authorList>
    </citation>
    <scope>NUCLEOTIDE SEQUENCE [GENOMIC DNA]</scope>
    <source>
        <strain>ATCC 33015 / DSM 3931 / JCM 6156 / NCIMB 12182 / mt-2</strain>
    </source>
</reference>
<name>RS21_PSEPU</name>